<evidence type="ECO:0000250" key="1"/>
<evidence type="ECO:0000250" key="2">
    <source>
        <dbReference type="UniProtKB" id="P00157"/>
    </source>
</evidence>
<evidence type="ECO:0000255" key="3">
    <source>
        <dbReference type="PROSITE-ProRule" id="PRU00967"/>
    </source>
</evidence>
<evidence type="ECO:0000255" key="4">
    <source>
        <dbReference type="PROSITE-ProRule" id="PRU00968"/>
    </source>
</evidence>
<feature type="chain" id="PRO_0000255112" description="Cytochrome b">
    <location>
        <begin position="1"/>
        <end position="379"/>
    </location>
</feature>
<feature type="transmembrane region" description="Helical" evidence="2">
    <location>
        <begin position="33"/>
        <end position="53"/>
    </location>
</feature>
<feature type="transmembrane region" description="Helical" evidence="2">
    <location>
        <begin position="77"/>
        <end position="98"/>
    </location>
</feature>
<feature type="transmembrane region" description="Helical" evidence="2">
    <location>
        <begin position="113"/>
        <end position="133"/>
    </location>
</feature>
<feature type="transmembrane region" description="Helical" evidence="2">
    <location>
        <begin position="178"/>
        <end position="198"/>
    </location>
</feature>
<feature type="transmembrane region" description="Helical" evidence="2">
    <location>
        <begin position="226"/>
        <end position="246"/>
    </location>
</feature>
<feature type="transmembrane region" description="Helical" evidence="2">
    <location>
        <begin position="288"/>
        <end position="308"/>
    </location>
</feature>
<feature type="transmembrane region" description="Helical" evidence="2">
    <location>
        <begin position="320"/>
        <end position="340"/>
    </location>
</feature>
<feature type="transmembrane region" description="Helical" evidence="2">
    <location>
        <begin position="347"/>
        <end position="367"/>
    </location>
</feature>
<feature type="binding site" description="axial binding residue" evidence="2">
    <location>
        <position position="83"/>
    </location>
    <ligand>
        <name>heme b</name>
        <dbReference type="ChEBI" id="CHEBI:60344"/>
        <label>b562</label>
    </ligand>
    <ligandPart>
        <name>Fe</name>
        <dbReference type="ChEBI" id="CHEBI:18248"/>
    </ligandPart>
</feature>
<feature type="binding site" description="axial binding residue" evidence="2">
    <location>
        <position position="97"/>
    </location>
    <ligand>
        <name>heme b</name>
        <dbReference type="ChEBI" id="CHEBI:60344"/>
        <label>b566</label>
    </ligand>
    <ligandPart>
        <name>Fe</name>
        <dbReference type="ChEBI" id="CHEBI:18248"/>
    </ligandPart>
</feature>
<feature type="binding site" description="axial binding residue" evidence="2">
    <location>
        <position position="182"/>
    </location>
    <ligand>
        <name>heme b</name>
        <dbReference type="ChEBI" id="CHEBI:60344"/>
        <label>b562</label>
    </ligand>
    <ligandPart>
        <name>Fe</name>
        <dbReference type="ChEBI" id="CHEBI:18248"/>
    </ligandPart>
</feature>
<feature type="binding site" description="axial binding residue" evidence="2">
    <location>
        <position position="196"/>
    </location>
    <ligand>
        <name>heme b</name>
        <dbReference type="ChEBI" id="CHEBI:60344"/>
        <label>b566</label>
    </ligand>
    <ligandPart>
        <name>Fe</name>
        <dbReference type="ChEBI" id="CHEBI:18248"/>
    </ligandPart>
</feature>
<feature type="binding site" evidence="2">
    <location>
        <position position="201"/>
    </location>
    <ligand>
        <name>a ubiquinone</name>
        <dbReference type="ChEBI" id="CHEBI:16389"/>
    </ligand>
</feature>
<organism>
    <name type="scientific">Perognathus inornatus</name>
    <name type="common">San Joaquin pocket mouse</name>
    <dbReference type="NCBI Taxonomy" id="38409"/>
    <lineage>
        <taxon>Eukaryota</taxon>
        <taxon>Metazoa</taxon>
        <taxon>Chordata</taxon>
        <taxon>Craniata</taxon>
        <taxon>Vertebrata</taxon>
        <taxon>Euteleostomi</taxon>
        <taxon>Mammalia</taxon>
        <taxon>Eutheria</taxon>
        <taxon>Euarchontoglires</taxon>
        <taxon>Glires</taxon>
        <taxon>Rodentia</taxon>
        <taxon>Castorimorpha</taxon>
        <taxon>Heteromyidae</taxon>
        <taxon>Perognathinae</taxon>
        <taxon>Perognathus</taxon>
    </lineage>
</organism>
<comment type="function">
    <text evidence="2">Component of the ubiquinol-cytochrome c reductase complex (complex III or cytochrome b-c1 complex) that is part of the mitochondrial respiratory chain. The b-c1 complex mediates electron transfer from ubiquinol to cytochrome c. Contributes to the generation of a proton gradient across the mitochondrial membrane that is then used for ATP synthesis.</text>
</comment>
<comment type="cofactor">
    <cofactor evidence="2">
        <name>heme b</name>
        <dbReference type="ChEBI" id="CHEBI:60344"/>
    </cofactor>
    <text evidence="2">Binds 2 heme b groups non-covalently.</text>
</comment>
<comment type="subunit">
    <text evidence="2">The cytochrome bc1 complex contains 11 subunits: 3 respiratory subunits (MT-CYB, CYC1 and UQCRFS1), 2 core proteins (UQCRC1 and UQCRC2) and 6 low-molecular weight proteins (UQCRH/QCR6, UQCRB/QCR7, UQCRQ/QCR8, UQCR10/QCR9, UQCR11/QCR10 and a cleavage product of UQCRFS1). This cytochrome bc1 complex then forms a dimer.</text>
</comment>
<comment type="subcellular location">
    <subcellularLocation>
        <location evidence="2">Mitochondrion inner membrane</location>
        <topology evidence="2">Multi-pass membrane protein</topology>
    </subcellularLocation>
</comment>
<comment type="miscellaneous">
    <text evidence="1">Heme 1 (or BL or b562) is low-potential and absorbs at about 562 nm, and heme 2 (or BH or b566) is high-potential and absorbs at about 566 nm.</text>
</comment>
<comment type="similarity">
    <text evidence="3 4">Belongs to the cytochrome b family.</text>
</comment>
<comment type="caution">
    <text evidence="2">The full-length protein contains only eight transmembrane helices, not nine as predicted by bioinformatics tools.</text>
</comment>
<geneLocation type="mitochondrion"/>
<gene>
    <name type="primary">MT-CYB</name>
    <name type="synonym">COB</name>
    <name type="synonym">CYTB</name>
    <name type="synonym">MTCYB</name>
</gene>
<name>CYB_PERIO</name>
<reference key="1">
    <citation type="journal article" date="2005" name="J. Mammal.">
        <title>Phylogenetics of the new world rodent family Heteromyidae.</title>
        <authorList>
            <person name="Alexander L.F."/>
            <person name="Riddle B.R."/>
        </authorList>
    </citation>
    <scope>NUCLEOTIDE SEQUENCE [GENOMIC DNA]</scope>
    <source>
        <strain>Isolate LVT 601</strain>
    </source>
</reference>
<accession>Q508J9</accession>
<keyword id="KW-0249">Electron transport</keyword>
<keyword id="KW-0349">Heme</keyword>
<keyword id="KW-0408">Iron</keyword>
<keyword id="KW-0472">Membrane</keyword>
<keyword id="KW-0479">Metal-binding</keyword>
<keyword id="KW-0496">Mitochondrion</keyword>
<keyword id="KW-0999">Mitochondrion inner membrane</keyword>
<keyword id="KW-0679">Respiratory chain</keyword>
<keyword id="KW-0812">Transmembrane</keyword>
<keyword id="KW-1133">Transmembrane helix</keyword>
<keyword id="KW-0813">Transport</keyword>
<keyword id="KW-0830">Ubiquinone</keyword>
<sequence length="379" mass="42816">MTIMRKTHPLMKMVNHAFIDLPAPSNISGWWNFGSLLGLCLIIQILTGLFLSMHYTPDTLTAFSSVAHICRDVNHGWLIRYMHANGASLFFICLYLHIGRGIYYGSYMYKETWNIGIVLLFLVMATAFMGYVLPWGQMSFWGATVITNLLSAIPYIGSDLVEWIWGGFSVDKATLNRFFAFHFILPFIIAAMAMVHLLFLHETGSNNPLGIPSDSDKIPFHPYYSYKDLLGGAALLAFFFTIVLFFPDALGDPDNYTPANPLNTPPHIKPEWYFLFAYAILRSIPNKLGGVIALVLSILVLALFPLXHTSNQRSLTFRPISQTMFWILVSDLFILTWIGGQPVEPPFIIIGQIASILYFSIILILFPIAGMIENKMLKW</sequence>
<proteinExistence type="inferred from homology"/>
<dbReference type="EMBL" id="AY926404">
    <property type="protein sequence ID" value="AAY23247.1"/>
    <property type="molecule type" value="Genomic_DNA"/>
</dbReference>
<dbReference type="GO" id="GO:0005743">
    <property type="term" value="C:mitochondrial inner membrane"/>
    <property type="evidence" value="ECO:0007669"/>
    <property type="project" value="UniProtKB-SubCell"/>
</dbReference>
<dbReference type="GO" id="GO:0045275">
    <property type="term" value="C:respiratory chain complex III"/>
    <property type="evidence" value="ECO:0007669"/>
    <property type="project" value="InterPro"/>
</dbReference>
<dbReference type="GO" id="GO:0046872">
    <property type="term" value="F:metal ion binding"/>
    <property type="evidence" value="ECO:0007669"/>
    <property type="project" value="UniProtKB-KW"/>
</dbReference>
<dbReference type="GO" id="GO:0008121">
    <property type="term" value="F:ubiquinol-cytochrome-c reductase activity"/>
    <property type="evidence" value="ECO:0007669"/>
    <property type="project" value="InterPro"/>
</dbReference>
<dbReference type="GO" id="GO:0006122">
    <property type="term" value="P:mitochondrial electron transport, ubiquinol to cytochrome c"/>
    <property type="evidence" value="ECO:0007669"/>
    <property type="project" value="TreeGrafter"/>
</dbReference>
<dbReference type="CDD" id="cd00290">
    <property type="entry name" value="cytochrome_b_C"/>
    <property type="match status" value="1"/>
</dbReference>
<dbReference type="CDD" id="cd00284">
    <property type="entry name" value="Cytochrome_b_N"/>
    <property type="match status" value="1"/>
</dbReference>
<dbReference type="FunFam" id="1.20.810.10:FF:000002">
    <property type="entry name" value="Cytochrome b"/>
    <property type="match status" value="1"/>
</dbReference>
<dbReference type="Gene3D" id="1.20.810.10">
    <property type="entry name" value="Cytochrome Bc1 Complex, Chain C"/>
    <property type="match status" value="1"/>
</dbReference>
<dbReference type="InterPro" id="IPR005798">
    <property type="entry name" value="Cyt_b/b6_C"/>
</dbReference>
<dbReference type="InterPro" id="IPR036150">
    <property type="entry name" value="Cyt_b/b6_C_sf"/>
</dbReference>
<dbReference type="InterPro" id="IPR005797">
    <property type="entry name" value="Cyt_b/b6_N"/>
</dbReference>
<dbReference type="InterPro" id="IPR027387">
    <property type="entry name" value="Cytb/b6-like_sf"/>
</dbReference>
<dbReference type="InterPro" id="IPR030689">
    <property type="entry name" value="Cytochrome_b"/>
</dbReference>
<dbReference type="InterPro" id="IPR048260">
    <property type="entry name" value="Cytochrome_b_C_euk/bac"/>
</dbReference>
<dbReference type="InterPro" id="IPR048259">
    <property type="entry name" value="Cytochrome_b_N_euk/bac"/>
</dbReference>
<dbReference type="InterPro" id="IPR016174">
    <property type="entry name" value="Di-haem_cyt_TM"/>
</dbReference>
<dbReference type="PANTHER" id="PTHR19271">
    <property type="entry name" value="CYTOCHROME B"/>
    <property type="match status" value="1"/>
</dbReference>
<dbReference type="PANTHER" id="PTHR19271:SF16">
    <property type="entry name" value="CYTOCHROME B"/>
    <property type="match status" value="1"/>
</dbReference>
<dbReference type="Pfam" id="PF00032">
    <property type="entry name" value="Cytochrom_B_C"/>
    <property type="match status" value="1"/>
</dbReference>
<dbReference type="Pfam" id="PF00033">
    <property type="entry name" value="Cytochrome_B"/>
    <property type="match status" value="1"/>
</dbReference>
<dbReference type="PIRSF" id="PIRSF038885">
    <property type="entry name" value="COB"/>
    <property type="match status" value="1"/>
</dbReference>
<dbReference type="SUPFAM" id="SSF81648">
    <property type="entry name" value="a domain/subunit of cytochrome bc1 complex (Ubiquinol-cytochrome c reductase)"/>
    <property type="match status" value="1"/>
</dbReference>
<dbReference type="SUPFAM" id="SSF81342">
    <property type="entry name" value="Transmembrane di-heme cytochromes"/>
    <property type="match status" value="1"/>
</dbReference>
<dbReference type="PROSITE" id="PS51003">
    <property type="entry name" value="CYTB_CTER"/>
    <property type="match status" value="1"/>
</dbReference>
<dbReference type="PROSITE" id="PS51002">
    <property type="entry name" value="CYTB_NTER"/>
    <property type="match status" value="1"/>
</dbReference>
<protein>
    <recommendedName>
        <fullName>Cytochrome b</fullName>
    </recommendedName>
    <alternativeName>
        <fullName>Complex III subunit 3</fullName>
    </alternativeName>
    <alternativeName>
        <fullName>Complex III subunit III</fullName>
    </alternativeName>
    <alternativeName>
        <fullName>Cytochrome b-c1 complex subunit 3</fullName>
    </alternativeName>
    <alternativeName>
        <fullName>Ubiquinol-cytochrome-c reductase complex cytochrome b subunit</fullName>
    </alternativeName>
</protein>